<feature type="initiator methionine" description="Removed" evidence="4">
    <location>
        <position position="1"/>
    </location>
</feature>
<feature type="chain" id="PRO_0000443238" description="Serine/threonine-protein kinase BSK11">
    <location>
        <begin position="2"/>
        <end position="507"/>
    </location>
</feature>
<feature type="domain" description="Protein kinase" evidence="2">
    <location>
        <begin position="75"/>
        <end position="332"/>
    </location>
</feature>
<feature type="region of interest" description="Disordered" evidence="3">
    <location>
        <begin position="16"/>
        <end position="44"/>
    </location>
</feature>
<feature type="compositionally biased region" description="Basic and acidic residues" evidence="3">
    <location>
        <begin position="16"/>
        <end position="26"/>
    </location>
</feature>
<feature type="compositionally biased region" description="Basic residues" evidence="3">
    <location>
        <begin position="27"/>
        <end position="41"/>
    </location>
</feature>
<feature type="active site" description="Proton acceptor" evidence="2">
    <location>
        <position position="200"/>
    </location>
</feature>
<feature type="binding site" evidence="2">
    <location>
        <begin position="81"/>
        <end position="89"/>
    </location>
    <ligand>
        <name>ATP</name>
        <dbReference type="ChEBI" id="CHEBI:30616"/>
    </ligand>
</feature>
<feature type="binding site" evidence="2">
    <location>
        <position position="106"/>
    </location>
    <ligand>
        <name>ATP</name>
        <dbReference type="ChEBI" id="CHEBI:30616"/>
    </ligand>
</feature>
<feature type="lipid moiety-binding region" description="N-myristoyl glycine" evidence="4">
    <location>
        <position position="2"/>
    </location>
</feature>
<accession>F4I7Y4</accession>
<accession>Q9C6I1</accession>
<sequence length="507" mass="57611">MGCCQSSFLKPSSLHDKKITSDDLSGRRGKGAKRGNRHRHANINEGRGWHFSDVPDFSEFSASVLRDATNNFNKNAVVSVCSDQEPNLVYQGCIRSDKDKRLIAVKKFSKTTWPDPKQFATEARAIGSLRHVRLVNLIGYCCEGDERLLVSEYMPNESLTKHLFHWEKQTMEWAMRLRVALYVAEALEYCRQSGLKLYHDLNTCRVLFDENGSPRLSCFGWMKNSKDGKNFSTNLAYTPPEYLRSGTLIPESVVFSFGTFLLDLLSGKHIPPSHAVGTIQKQNLNVLMDSHLEGNYPEEDAAMVFDLASKCLHNNPNERPEIGDIISVITTLQQKLDVPSYTMLGISKLEKLEMEHPKSLIYDACHQMDLAALHQILEAMEYKEDEVTCELSFQQWAQQIKDVCNTRQQGDSAFRNKHFESAIDKYTQFIEIGIMISPTVYARRSMCYLFCDQPDAALRDAMQAQCVYSDWPTAFYLQAVALSKLNMVEDSATMLKEALILEDKRGS</sequence>
<name>BSK11_ARATH</name>
<dbReference type="EC" id="2.7.11.1" evidence="7"/>
<dbReference type="EMBL" id="AC079284">
    <property type="protein sequence ID" value="AAG50929.1"/>
    <property type="status" value="ALT_SEQ"/>
    <property type="molecule type" value="Genomic_DNA"/>
</dbReference>
<dbReference type="EMBL" id="CP002684">
    <property type="protein sequence ID" value="AEE32609.1"/>
    <property type="molecule type" value="Genomic_DNA"/>
</dbReference>
<dbReference type="PIR" id="B96547">
    <property type="entry name" value="B96547"/>
</dbReference>
<dbReference type="RefSeq" id="NP_175512.2">
    <property type="nucleotide sequence ID" value="NM_103979.3"/>
</dbReference>
<dbReference type="SMR" id="F4I7Y4"/>
<dbReference type="FunCoup" id="F4I7Y4">
    <property type="interactions" value="293"/>
</dbReference>
<dbReference type="STRING" id="3702.F4I7Y4"/>
<dbReference type="iPTMnet" id="F4I7Y4"/>
<dbReference type="PaxDb" id="3702-AT1G50990.1"/>
<dbReference type="ProteomicsDB" id="240505"/>
<dbReference type="EnsemblPlants" id="AT1G50990.1">
    <property type="protein sequence ID" value="AT1G50990.1"/>
    <property type="gene ID" value="AT1G50990"/>
</dbReference>
<dbReference type="GeneID" id="841521"/>
<dbReference type="Gramene" id="AT1G50990.1">
    <property type="protein sequence ID" value="AT1G50990.1"/>
    <property type="gene ID" value="AT1G50990"/>
</dbReference>
<dbReference type="KEGG" id="ath:AT1G50990"/>
<dbReference type="Araport" id="AT1G50990"/>
<dbReference type="TAIR" id="AT1G50990">
    <property type="gene designation" value="BSK11"/>
</dbReference>
<dbReference type="eggNOG" id="ENOG502QQT6">
    <property type="taxonomic scope" value="Eukaryota"/>
</dbReference>
<dbReference type="HOGENOM" id="CLU_000288_15_0_1"/>
<dbReference type="InParanoid" id="F4I7Y4"/>
<dbReference type="OMA" id="IGKMRHM"/>
<dbReference type="PRO" id="PR:F4I7Y4"/>
<dbReference type="Proteomes" id="UP000006548">
    <property type="component" value="Chromosome 1"/>
</dbReference>
<dbReference type="ExpressionAtlas" id="F4I7Y4">
    <property type="expression patterns" value="baseline and differential"/>
</dbReference>
<dbReference type="GO" id="GO:0005886">
    <property type="term" value="C:plasma membrane"/>
    <property type="evidence" value="ECO:0007669"/>
    <property type="project" value="UniProtKB-SubCell"/>
</dbReference>
<dbReference type="GO" id="GO:0005524">
    <property type="term" value="F:ATP binding"/>
    <property type="evidence" value="ECO:0007669"/>
    <property type="project" value="UniProtKB-KW"/>
</dbReference>
<dbReference type="GO" id="GO:0106310">
    <property type="term" value="F:protein serine kinase activity"/>
    <property type="evidence" value="ECO:0007669"/>
    <property type="project" value="RHEA"/>
</dbReference>
<dbReference type="GO" id="GO:0004674">
    <property type="term" value="F:protein serine/threonine kinase activity"/>
    <property type="evidence" value="ECO:0007669"/>
    <property type="project" value="UniProtKB-KW"/>
</dbReference>
<dbReference type="GO" id="GO:0009742">
    <property type="term" value="P:brassinosteroid mediated signaling pathway"/>
    <property type="evidence" value="ECO:0007669"/>
    <property type="project" value="InterPro"/>
</dbReference>
<dbReference type="FunFam" id="1.10.510.10:FF:001414">
    <property type="entry name" value="Probable inactive receptor-like kinase BSK12"/>
    <property type="match status" value="1"/>
</dbReference>
<dbReference type="FunFam" id="1.25.40.10:FF:000016">
    <property type="entry name" value="probable serine/threonine-protein kinase At4g35230"/>
    <property type="match status" value="1"/>
</dbReference>
<dbReference type="FunFam" id="3.30.200.20:FF:000154">
    <property type="entry name" value="probable serine/threonine-protein kinase At4g35230"/>
    <property type="match status" value="1"/>
</dbReference>
<dbReference type="Gene3D" id="3.30.200.20">
    <property type="entry name" value="Phosphorylase Kinase, domain 1"/>
    <property type="match status" value="1"/>
</dbReference>
<dbReference type="Gene3D" id="1.25.40.10">
    <property type="entry name" value="Tetratricopeptide repeat domain"/>
    <property type="match status" value="1"/>
</dbReference>
<dbReference type="Gene3D" id="1.10.510.10">
    <property type="entry name" value="Transferase(Phosphotransferase) domain 1"/>
    <property type="match status" value="1"/>
</dbReference>
<dbReference type="InterPro" id="IPR045845">
    <property type="entry name" value="BSK"/>
</dbReference>
<dbReference type="InterPro" id="IPR011009">
    <property type="entry name" value="Kinase-like_dom_sf"/>
</dbReference>
<dbReference type="InterPro" id="IPR000719">
    <property type="entry name" value="Prot_kinase_dom"/>
</dbReference>
<dbReference type="InterPro" id="IPR001245">
    <property type="entry name" value="Ser-Thr/Tyr_kinase_cat_dom"/>
</dbReference>
<dbReference type="InterPro" id="IPR011990">
    <property type="entry name" value="TPR-like_helical_dom_sf"/>
</dbReference>
<dbReference type="PANTHER" id="PTHR45863">
    <property type="entry name" value="SERINE/THREONINE-PROTEIN KINASE BSK5"/>
    <property type="match status" value="1"/>
</dbReference>
<dbReference type="PANTHER" id="PTHR45863:SF14">
    <property type="entry name" value="SERINE_THREONINE-PROTEIN KINASE BSK11"/>
    <property type="match status" value="1"/>
</dbReference>
<dbReference type="Pfam" id="PF07714">
    <property type="entry name" value="PK_Tyr_Ser-Thr"/>
    <property type="match status" value="1"/>
</dbReference>
<dbReference type="SUPFAM" id="SSF56112">
    <property type="entry name" value="Protein kinase-like (PK-like)"/>
    <property type="match status" value="1"/>
</dbReference>
<dbReference type="SUPFAM" id="SSF48452">
    <property type="entry name" value="TPR-like"/>
    <property type="match status" value="1"/>
</dbReference>
<dbReference type="PROSITE" id="PS50011">
    <property type="entry name" value="PROTEIN_KINASE_DOM"/>
    <property type="match status" value="1"/>
</dbReference>
<reference key="1">
    <citation type="journal article" date="2000" name="Nature">
        <title>Sequence and analysis of chromosome 1 of the plant Arabidopsis thaliana.</title>
        <authorList>
            <person name="Theologis A."/>
            <person name="Ecker J.R."/>
            <person name="Palm C.J."/>
            <person name="Federspiel N.A."/>
            <person name="Kaul S."/>
            <person name="White O."/>
            <person name="Alonso J."/>
            <person name="Altafi H."/>
            <person name="Araujo R."/>
            <person name="Bowman C.L."/>
            <person name="Brooks S.Y."/>
            <person name="Buehler E."/>
            <person name="Chan A."/>
            <person name="Chao Q."/>
            <person name="Chen H."/>
            <person name="Cheuk R.F."/>
            <person name="Chin C.W."/>
            <person name="Chung M.K."/>
            <person name="Conn L."/>
            <person name="Conway A.B."/>
            <person name="Conway A.R."/>
            <person name="Creasy T.H."/>
            <person name="Dewar K."/>
            <person name="Dunn P."/>
            <person name="Etgu P."/>
            <person name="Feldblyum T.V."/>
            <person name="Feng J.-D."/>
            <person name="Fong B."/>
            <person name="Fujii C.Y."/>
            <person name="Gill J.E."/>
            <person name="Goldsmith A.D."/>
            <person name="Haas B."/>
            <person name="Hansen N.F."/>
            <person name="Hughes B."/>
            <person name="Huizar L."/>
            <person name="Hunter J.L."/>
            <person name="Jenkins J."/>
            <person name="Johnson-Hopson C."/>
            <person name="Khan S."/>
            <person name="Khaykin E."/>
            <person name="Kim C.J."/>
            <person name="Koo H.L."/>
            <person name="Kremenetskaia I."/>
            <person name="Kurtz D.B."/>
            <person name="Kwan A."/>
            <person name="Lam B."/>
            <person name="Langin-Hooper S."/>
            <person name="Lee A."/>
            <person name="Lee J.M."/>
            <person name="Lenz C.A."/>
            <person name="Li J.H."/>
            <person name="Li Y.-P."/>
            <person name="Lin X."/>
            <person name="Liu S.X."/>
            <person name="Liu Z.A."/>
            <person name="Luros J.S."/>
            <person name="Maiti R."/>
            <person name="Marziali A."/>
            <person name="Militscher J."/>
            <person name="Miranda M."/>
            <person name="Nguyen M."/>
            <person name="Nierman W.C."/>
            <person name="Osborne B.I."/>
            <person name="Pai G."/>
            <person name="Peterson J."/>
            <person name="Pham P.K."/>
            <person name="Rizzo M."/>
            <person name="Rooney T."/>
            <person name="Rowley D."/>
            <person name="Sakano H."/>
            <person name="Salzberg S.L."/>
            <person name="Schwartz J.R."/>
            <person name="Shinn P."/>
            <person name="Southwick A.M."/>
            <person name="Sun H."/>
            <person name="Tallon L.J."/>
            <person name="Tambunga G."/>
            <person name="Toriumi M.J."/>
            <person name="Town C.D."/>
            <person name="Utterback T."/>
            <person name="Van Aken S."/>
            <person name="Vaysberg M."/>
            <person name="Vysotskaia V.S."/>
            <person name="Walker M."/>
            <person name="Wu D."/>
            <person name="Yu G."/>
            <person name="Fraser C.M."/>
            <person name="Venter J.C."/>
            <person name="Davis R.W."/>
        </authorList>
    </citation>
    <scope>NUCLEOTIDE SEQUENCE [LARGE SCALE GENOMIC DNA]</scope>
    <source>
        <strain>cv. Columbia</strain>
    </source>
</reference>
<reference key="2">
    <citation type="journal article" date="2017" name="Plant J.">
        <title>Araport11: a complete reannotation of the Arabidopsis thaliana reference genome.</title>
        <authorList>
            <person name="Cheng C.Y."/>
            <person name="Krishnakumar V."/>
            <person name="Chan A.P."/>
            <person name="Thibaud-Nissen F."/>
            <person name="Schobel S."/>
            <person name="Town C.D."/>
        </authorList>
    </citation>
    <scope>GENOME REANNOTATION</scope>
    <source>
        <strain>cv. Columbia</strain>
    </source>
</reference>
<reference key="3">
    <citation type="journal article" date="2003" name="J. Biol. Chem.">
        <title>Unexpected protein families including cell defense components feature in the N-myristoylome of a higher eukaryote.</title>
        <authorList>
            <person name="Boisson B."/>
            <person name="Giglione C."/>
            <person name="Meinnel T."/>
        </authorList>
    </citation>
    <scope>MYRISTOYLATION AT GLY-2</scope>
</reference>
<reference key="4">
    <citation type="journal article" date="2013" name="Plant J.">
        <title>BSKs are partially redundant positive regulators of brassinosteroid signaling in Arabidopsis.</title>
        <authorList>
            <person name="Sreeramulu S."/>
            <person name="Mostizky Y."/>
            <person name="Sunitha S."/>
            <person name="Shani E."/>
            <person name="Nahum H."/>
            <person name="Salomon D."/>
            <person name="Hayun L.B."/>
            <person name="Gruetter C."/>
            <person name="Rauh D."/>
            <person name="Ori N."/>
            <person name="Sessa G."/>
        </authorList>
    </citation>
    <scope>INTERACTION WITH BRI1; ASK7/BIN2; BSK1; BSK6 AND BSK8</scope>
    <scope>PHOSPHORYLATION</scope>
</reference>
<proteinExistence type="evidence at protein level"/>
<protein>
    <recommendedName>
        <fullName evidence="7">Serine/threonine-protein kinase BSK11</fullName>
        <ecNumber evidence="7">2.7.11.1</ecNumber>
    </recommendedName>
    <alternativeName>
        <fullName evidence="6">Brassinosteroid-signaling kinase 11</fullName>
    </alternativeName>
</protein>
<evidence type="ECO:0000250" key="1">
    <source>
        <dbReference type="UniProtKB" id="Q944A7"/>
    </source>
</evidence>
<evidence type="ECO:0000255" key="2">
    <source>
        <dbReference type="PROSITE-ProRule" id="PRU00159"/>
    </source>
</evidence>
<evidence type="ECO:0000256" key="3">
    <source>
        <dbReference type="SAM" id="MobiDB-lite"/>
    </source>
</evidence>
<evidence type="ECO:0000269" key="4">
    <source>
    </source>
</evidence>
<evidence type="ECO:0000269" key="5">
    <source>
    </source>
</evidence>
<evidence type="ECO:0000303" key="6">
    <source>
    </source>
</evidence>
<evidence type="ECO:0000305" key="7"/>
<evidence type="ECO:0000305" key="8">
    <source>
    </source>
</evidence>
<evidence type="ECO:0000312" key="9">
    <source>
        <dbReference type="Araport" id="AT1G50990"/>
    </source>
</evidence>
<evidence type="ECO:0000312" key="10">
    <source>
        <dbReference type="EMBL" id="AAG50929.1"/>
    </source>
</evidence>
<keyword id="KW-0067">ATP-binding</keyword>
<keyword id="KW-1003">Cell membrane</keyword>
<keyword id="KW-0418">Kinase</keyword>
<keyword id="KW-0449">Lipoprotein</keyword>
<keyword id="KW-0472">Membrane</keyword>
<keyword id="KW-0519">Myristate</keyword>
<keyword id="KW-0547">Nucleotide-binding</keyword>
<keyword id="KW-1185">Reference proteome</keyword>
<keyword id="KW-0723">Serine/threonine-protein kinase</keyword>
<keyword id="KW-0808">Transferase</keyword>
<organism>
    <name type="scientific">Arabidopsis thaliana</name>
    <name type="common">Mouse-ear cress</name>
    <dbReference type="NCBI Taxonomy" id="3702"/>
    <lineage>
        <taxon>Eukaryota</taxon>
        <taxon>Viridiplantae</taxon>
        <taxon>Streptophyta</taxon>
        <taxon>Embryophyta</taxon>
        <taxon>Tracheophyta</taxon>
        <taxon>Spermatophyta</taxon>
        <taxon>Magnoliopsida</taxon>
        <taxon>eudicotyledons</taxon>
        <taxon>Gunneridae</taxon>
        <taxon>Pentapetalae</taxon>
        <taxon>rosids</taxon>
        <taxon>malvids</taxon>
        <taxon>Brassicales</taxon>
        <taxon>Brassicaceae</taxon>
        <taxon>Camelineae</taxon>
        <taxon>Arabidopsis</taxon>
    </lineage>
</organism>
<gene>
    <name evidence="6" type="primary">BSK11</name>
    <name evidence="9" type="ordered locus">At1g50990</name>
    <name evidence="10" type="ORF">F8A12.21</name>
</gene>
<comment type="function">
    <text evidence="1">Probable serine/threonine kinase that acts as a positive regulator of brassinosteroid (BR) signaling downstream of the receptor kinase BRI1.</text>
</comment>
<comment type="catalytic activity">
    <reaction evidence="7">
        <text>L-seryl-[protein] + ATP = O-phospho-L-seryl-[protein] + ADP + H(+)</text>
        <dbReference type="Rhea" id="RHEA:17989"/>
        <dbReference type="Rhea" id="RHEA-COMP:9863"/>
        <dbReference type="Rhea" id="RHEA-COMP:11604"/>
        <dbReference type="ChEBI" id="CHEBI:15378"/>
        <dbReference type="ChEBI" id="CHEBI:29999"/>
        <dbReference type="ChEBI" id="CHEBI:30616"/>
        <dbReference type="ChEBI" id="CHEBI:83421"/>
        <dbReference type="ChEBI" id="CHEBI:456216"/>
        <dbReference type="EC" id="2.7.11.1"/>
    </reaction>
</comment>
<comment type="catalytic activity">
    <reaction evidence="7">
        <text>L-threonyl-[protein] + ATP = O-phospho-L-threonyl-[protein] + ADP + H(+)</text>
        <dbReference type="Rhea" id="RHEA:46608"/>
        <dbReference type="Rhea" id="RHEA-COMP:11060"/>
        <dbReference type="Rhea" id="RHEA-COMP:11605"/>
        <dbReference type="ChEBI" id="CHEBI:15378"/>
        <dbReference type="ChEBI" id="CHEBI:30013"/>
        <dbReference type="ChEBI" id="CHEBI:30616"/>
        <dbReference type="ChEBI" id="CHEBI:61977"/>
        <dbReference type="ChEBI" id="CHEBI:456216"/>
        <dbReference type="EC" id="2.7.11.1"/>
    </reaction>
</comment>
<comment type="subunit">
    <text evidence="5">Interacts with BRI1, ASK7/BIN2, BSK1, BSK6 and BSK8.</text>
</comment>
<comment type="subcellular location">
    <subcellularLocation>
        <location evidence="8">Cell membrane</location>
        <topology evidence="8">Lipid-anchor</topology>
    </subcellularLocation>
</comment>
<comment type="PTM">
    <text evidence="5">Phosphorylated by BRI1, ASK7/BIN2 and ASK9/BIL2.</text>
</comment>
<comment type="similarity">
    <text evidence="7">Belongs to the protein kinase superfamily. Ser/Thr protein kinase family.</text>
</comment>
<comment type="sequence caution" evidence="7">
    <conflict type="erroneous gene model prediction">
        <sequence resource="EMBL-CDS" id="AAG50929"/>
    </conflict>
</comment>